<sequence>MKNEMLALILAGGQGTRLGKLTQNIAKPAVQFGGRYRIIDFALSNCANSGIDNVGVITQYQPLVLNSHIGNGSSWGLEGINRGVTILQPFSATEGNKWFEGTSHAIYQNIDYIDSINPEYVLILSGDHIYKMDYEEMLQVHKDNMASLTVAVLDVPLKEASRFGIMNTDSNDRIVEFEEKPEHPKSTKASMGIYIFNWPRLRKMLVDSENGNIDMSDFGKNVIPAYLESGERVYTYNFNGYWKDVGTIESLWEANMEYIAENNPLDSRNRSWKIYSKNHIAPPNFISEHAEVTDSLVVDGCFVTGKVDHSILSANVHMKQGAEIKDSFIMSGAVIGEGAKINRAIIGEGAIIGNNVVIDGTDEIQVVGYNEVVGVSNEN</sequence>
<gene>
    <name evidence="1" type="primary">glgC</name>
    <name type="ordered locus">SUB0662</name>
</gene>
<protein>
    <recommendedName>
        <fullName evidence="1">Glucose-1-phosphate adenylyltransferase</fullName>
        <ecNumber evidence="1">2.7.7.27</ecNumber>
    </recommendedName>
    <alternativeName>
        <fullName evidence="1">ADP-glucose pyrophosphorylase</fullName>
        <shortName evidence="1">ADPGlc PPase</shortName>
    </alternativeName>
    <alternativeName>
        <fullName evidence="1">ADP-glucose synthase</fullName>
    </alternativeName>
</protein>
<proteinExistence type="inferred from homology"/>
<organism>
    <name type="scientific">Streptococcus uberis (strain ATCC BAA-854 / 0140J)</name>
    <dbReference type="NCBI Taxonomy" id="218495"/>
    <lineage>
        <taxon>Bacteria</taxon>
        <taxon>Bacillati</taxon>
        <taxon>Bacillota</taxon>
        <taxon>Bacilli</taxon>
        <taxon>Lactobacillales</taxon>
        <taxon>Streptococcaceae</taxon>
        <taxon>Streptococcus</taxon>
    </lineage>
</organism>
<accession>B9DRS6</accession>
<name>GLGC_STRU0</name>
<keyword id="KW-0067">ATP-binding</keyword>
<keyword id="KW-0119">Carbohydrate metabolism</keyword>
<keyword id="KW-0320">Glycogen biosynthesis</keyword>
<keyword id="KW-0321">Glycogen metabolism</keyword>
<keyword id="KW-0547">Nucleotide-binding</keyword>
<keyword id="KW-0548">Nucleotidyltransferase</keyword>
<keyword id="KW-1185">Reference proteome</keyword>
<keyword id="KW-0808">Transferase</keyword>
<dbReference type="EC" id="2.7.7.27" evidence="1"/>
<dbReference type="EMBL" id="AM946015">
    <property type="protein sequence ID" value="CAR41531.1"/>
    <property type="molecule type" value="Genomic_DNA"/>
</dbReference>
<dbReference type="RefSeq" id="WP_012658180.1">
    <property type="nucleotide sequence ID" value="NC_012004.1"/>
</dbReference>
<dbReference type="SMR" id="B9DRS6"/>
<dbReference type="STRING" id="218495.SUB0662"/>
<dbReference type="KEGG" id="sub:SUB0662"/>
<dbReference type="eggNOG" id="COG0448">
    <property type="taxonomic scope" value="Bacteria"/>
</dbReference>
<dbReference type="HOGENOM" id="CLU_029499_14_0_9"/>
<dbReference type="OrthoDB" id="9801810at2"/>
<dbReference type="UniPathway" id="UPA00164"/>
<dbReference type="Proteomes" id="UP000000449">
    <property type="component" value="Chromosome"/>
</dbReference>
<dbReference type="GO" id="GO:0005524">
    <property type="term" value="F:ATP binding"/>
    <property type="evidence" value="ECO:0007669"/>
    <property type="project" value="UniProtKB-KW"/>
</dbReference>
<dbReference type="GO" id="GO:0008878">
    <property type="term" value="F:glucose-1-phosphate adenylyltransferase activity"/>
    <property type="evidence" value="ECO:0007669"/>
    <property type="project" value="UniProtKB-UniRule"/>
</dbReference>
<dbReference type="GO" id="GO:0005978">
    <property type="term" value="P:glycogen biosynthetic process"/>
    <property type="evidence" value="ECO:0007669"/>
    <property type="project" value="UniProtKB-UniRule"/>
</dbReference>
<dbReference type="CDD" id="cd02508">
    <property type="entry name" value="ADP_Glucose_PP"/>
    <property type="match status" value="1"/>
</dbReference>
<dbReference type="CDD" id="cd04651">
    <property type="entry name" value="LbH_G1P_AT_C"/>
    <property type="match status" value="1"/>
</dbReference>
<dbReference type="Gene3D" id="2.160.10.10">
    <property type="entry name" value="Hexapeptide repeat proteins"/>
    <property type="match status" value="1"/>
</dbReference>
<dbReference type="Gene3D" id="3.90.550.10">
    <property type="entry name" value="Spore Coat Polysaccharide Biosynthesis Protein SpsA, Chain A"/>
    <property type="match status" value="1"/>
</dbReference>
<dbReference type="HAMAP" id="MF_00624">
    <property type="entry name" value="GlgC"/>
    <property type="match status" value="1"/>
</dbReference>
<dbReference type="InterPro" id="IPR011831">
    <property type="entry name" value="ADP-Glc_PPase"/>
</dbReference>
<dbReference type="InterPro" id="IPR005836">
    <property type="entry name" value="ADP_Glu_pyroP_CS"/>
</dbReference>
<dbReference type="InterPro" id="IPR023049">
    <property type="entry name" value="GlgC_bac"/>
</dbReference>
<dbReference type="InterPro" id="IPR056818">
    <property type="entry name" value="GlmU/GlgC-like_hexapep"/>
</dbReference>
<dbReference type="InterPro" id="IPR005835">
    <property type="entry name" value="NTP_transferase_dom"/>
</dbReference>
<dbReference type="InterPro" id="IPR029044">
    <property type="entry name" value="Nucleotide-diphossugar_trans"/>
</dbReference>
<dbReference type="InterPro" id="IPR011004">
    <property type="entry name" value="Trimer_LpxA-like_sf"/>
</dbReference>
<dbReference type="NCBIfam" id="TIGR02091">
    <property type="entry name" value="glgC"/>
    <property type="match status" value="1"/>
</dbReference>
<dbReference type="NCBIfam" id="NF003670">
    <property type="entry name" value="PRK05293.1"/>
    <property type="match status" value="1"/>
</dbReference>
<dbReference type="PANTHER" id="PTHR43523:SF2">
    <property type="entry name" value="GLUCOSE-1-PHOSPHATE ADENYLYLTRANSFERASE"/>
    <property type="match status" value="1"/>
</dbReference>
<dbReference type="PANTHER" id="PTHR43523">
    <property type="entry name" value="GLUCOSE-1-PHOSPHATE ADENYLYLTRANSFERASE-RELATED"/>
    <property type="match status" value="1"/>
</dbReference>
<dbReference type="Pfam" id="PF24894">
    <property type="entry name" value="Hexapep_GlmU"/>
    <property type="match status" value="1"/>
</dbReference>
<dbReference type="Pfam" id="PF00483">
    <property type="entry name" value="NTP_transferase"/>
    <property type="match status" value="1"/>
</dbReference>
<dbReference type="SUPFAM" id="SSF53448">
    <property type="entry name" value="Nucleotide-diphospho-sugar transferases"/>
    <property type="match status" value="1"/>
</dbReference>
<dbReference type="SUPFAM" id="SSF51161">
    <property type="entry name" value="Trimeric LpxA-like enzymes"/>
    <property type="match status" value="1"/>
</dbReference>
<dbReference type="PROSITE" id="PS00808">
    <property type="entry name" value="ADP_GLC_PYROPHOSPH_1"/>
    <property type="match status" value="1"/>
</dbReference>
<dbReference type="PROSITE" id="PS00809">
    <property type="entry name" value="ADP_GLC_PYROPHOSPH_2"/>
    <property type="match status" value="1"/>
</dbReference>
<dbReference type="PROSITE" id="PS00810">
    <property type="entry name" value="ADP_GLC_PYROPHOSPH_3"/>
    <property type="match status" value="1"/>
</dbReference>
<feature type="chain" id="PRO_1000147237" description="Glucose-1-phosphate adenylyltransferase">
    <location>
        <begin position="1"/>
        <end position="379"/>
    </location>
</feature>
<feature type="binding site" evidence="1">
    <location>
        <position position="164"/>
    </location>
    <ligand>
        <name>alpha-D-glucose 1-phosphate</name>
        <dbReference type="ChEBI" id="CHEBI:58601"/>
    </ligand>
</feature>
<feature type="binding site" evidence="1">
    <location>
        <begin position="179"/>
        <end position="180"/>
    </location>
    <ligand>
        <name>alpha-D-glucose 1-phosphate</name>
        <dbReference type="ChEBI" id="CHEBI:58601"/>
    </ligand>
</feature>
<feature type="binding site" evidence="1">
    <location>
        <position position="190"/>
    </location>
    <ligand>
        <name>alpha-D-glucose 1-phosphate</name>
        <dbReference type="ChEBI" id="CHEBI:58601"/>
    </ligand>
</feature>
<comment type="function">
    <text evidence="1">Involved in the biosynthesis of ADP-glucose, a building block required for the elongation reactions to produce glycogen. Catalyzes the reaction between ATP and alpha-D-glucose 1-phosphate (G1P) to produce pyrophosphate and ADP-Glc.</text>
</comment>
<comment type="catalytic activity">
    <reaction evidence="1">
        <text>alpha-D-glucose 1-phosphate + ATP + H(+) = ADP-alpha-D-glucose + diphosphate</text>
        <dbReference type="Rhea" id="RHEA:12120"/>
        <dbReference type="ChEBI" id="CHEBI:15378"/>
        <dbReference type="ChEBI" id="CHEBI:30616"/>
        <dbReference type="ChEBI" id="CHEBI:33019"/>
        <dbReference type="ChEBI" id="CHEBI:57498"/>
        <dbReference type="ChEBI" id="CHEBI:58601"/>
        <dbReference type="EC" id="2.7.7.27"/>
    </reaction>
</comment>
<comment type="pathway">
    <text evidence="1">Glycan biosynthesis; glycogen biosynthesis.</text>
</comment>
<comment type="subunit">
    <text evidence="1">Homotetramer.</text>
</comment>
<comment type="similarity">
    <text evidence="1">Belongs to the bacterial/plant glucose-1-phosphate adenylyltransferase family.</text>
</comment>
<reference key="1">
    <citation type="journal article" date="2009" name="BMC Genomics">
        <title>Evidence for niche adaptation in the genome of the bovine pathogen Streptococcus uberis.</title>
        <authorList>
            <person name="Ward P.N."/>
            <person name="Holden M.T.G."/>
            <person name="Leigh J.A."/>
            <person name="Lennard N."/>
            <person name="Bignell A."/>
            <person name="Barron A."/>
            <person name="Clark L."/>
            <person name="Quail M.A."/>
            <person name="Woodward J."/>
            <person name="Barrell B.G."/>
            <person name="Egan S.A."/>
            <person name="Field T.R."/>
            <person name="Maskell D."/>
            <person name="Kehoe M."/>
            <person name="Dowson C.G."/>
            <person name="Chanter N."/>
            <person name="Whatmore A.M."/>
            <person name="Bentley S.D."/>
            <person name="Parkhill J."/>
        </authorList>
    </citation>
    <scope>NUCLEOTIDE SEQUENCE [LARGE SCALE GENOMIC DNA]</scope>
    <source>
        <strain>ATCC BAA-854 / 0140J</strain>
    </source>
</reference>
<evidence type="ECO:0000255" key="1">
    <source>
        <dbReference type="HAMAP-Rule" id="MF_00624"/>
    </source>
</evidence>